<evidence type="ECO:0000255" key="1">
    <source>
        <dbReference type="PROSITE-ProRule" id="PRU00238"/>
    </source>
</evidence>
<sequence length="141" mass="15825">MLTAEDKKLIQAIWDKVQGHQEDFGAEALQRMFITYPTTKTYFPHFDLSPGSDQVRSHGKKVVNALGNAVKSMDNLSQALSELSNLHAYNLRVDPVNFKLLSQCFQVVLAVHLGKEYTPEVHSAFDKFLSAVAAVLAEKYR</sequence>
<organism>
    <name type="scientific">Accipiter gentilis</name>
    <name type="common">Northern goshawk</name>
    <name type="synonym">Falco gentilis</name>
    <dbReference type="NCBI Taxonomy" id="8957"/>
    <lineage>
        <taxon>Eukaryota</taxon>
        <taxon>Metazoa</taxon>
        <taxon>Chordata</taxon>
        <taxon>Craniata</taxon>
        <taxon>Vertebrata</taxon>
        <taxon>Euteleostomi</taxon>
        <taxon>Archelosauria</taxon>
        <taxon>Archosauria</taxon>
        <taxon>Dinosauria</taxon>
        <taxon>Saurischia</taxon>
        <taxon>Theropoda</taxon>
        <taxon>Coelurosauria</taxon>
        <taxon>Aves</taxon>
        <taxon>Neognathae</taxon>
        <taxon>Neoaves</taxon>
        <taxon>Telluraves</taxon>
        <taxon>Accipitrimorphae</taxon>
        <taxon>Accipitriformes</taxon>
        <taxon>Accipitridae</taxon>
        <taxon>Accipitrinae</taxon>
        <taxon>Astur</taxon>
    </lineage>
</organism>
<reference key="1">
    <citation type="journal article" date="1987" name="Biol. Chem. Hoppe-Seyler">
        <title>High-altitude respiration of birds. The primary structures of the major and minor hemoglobin component of adult goshawk (Accipiter gentilis, Accipitrinae).</title>
        <authorList>
            <person name="Hiebl I."/>
            <person name="Kosters J."/>
            <person name="Braunitzer G."/>
        </authorList>
    </citation>
    <scope>PROTEIN SEQUENCE</scope>
</reference>
<feature type="chain" id="PRO_0000052814" description="Hemoglobin subunit alpha-D">
    <location>
        <begin position="1"/>
        <end position="141"/>
    </location>
</feature>
<feature type="domain" description="Globin" evidence="1">
    <location>
        <begin position="1"/>
        <end position="141"/>
    </location>
</feature>
<feature type="binding site" description="distal binding residue">
    <location>
        <position position="58"/>
    </location>
    <ligand>
        <name>heme b</name>
        <dbReference type="ChEBI" id="CHEBI:60344"/>
    </ligand>
    <ligandPart>
        <name>Fe</name>
        <dbReference type="ChEBI" id="CHEBI:18248"/>
    </ligandPart>
</feature>
<feature type="binding site" description="proximal binding residue">
    <location>
        <position position="87"/>
    </location>
    <ligand>
        <name>heme b</name>
        <dbReference type="ChEBI" id="CHEBI:60344"/>
    </ligand>
    <ligandPart>
        <name>Fe</name>
        <dbReference type="ChEBI" id="CHEBI:18248"/>
    </ligandPart>
</feature>
<dbReference type="PIR" id="A26544">
    <property type="entry name" value="A26544"/>
</dbReference>
<dbReference type="SMR" id="P08849"/>
<dbReference type="GO" id="GO:0072562">
    <property type="term" value="C:blood microparticle"/>
    <property type="evidence" value="ECO:0007669"/>
    <property type="project" value="TreeGrafter"/>
</dbReference>
<dbReference type="GO" id="GO:0031838">
    <property type="term" value="C:haptoglobin-hemoglobin complex"/>
    <property type="evidence" value="ECO:0007669"/>
    <property type="project" value="TreeGrafter"/>
</dbReference>
<dbReference type="GO" id="GO:0005833">
    <property type="term" value="C:hemoglobin complex"/>
    <property type="evidence" value="ECO:0007669"/>
    <property type="project" value="InterPro"/>
</dbReference>
<dbReference type="GO" id="GO:0031720">
    <property type="term" value="F:haptoglobin binding"/>
    <property type="evidence" value="ECO:0007669"/>
    <property type="project" value="TreeGrafter"/>
</dbReference>
<dbReference type="GO" id="GO:0020037">
    <property type="term" value="F:heme binding"/>
    <property type="evidence" value="ECO:0007669"/>
    <property type="project" value="InterPro"/>
</dbReference>
<dbReference type="GO" id="GO:0046872">
    <property type="term" value="F:metal ion binding"/>
    <property type="evidence" value="ECO:0007669"/>
    <property type="project" value="UniProtKB-KW"/>
</dbReference>
<dbReference type="GO" id="GO:0043177">
    <property type="term" value="F:organic acid binding"/>
    <property type="evidence" value="ECO:0007669"/>
    <property type="project" value="TreeGrafter"/>
</dbReference>
<dbReference type="GO" id="GO:0019825">
    <property type="term" value="F:oxygen binding"/>
    <property type="evidence" value="ECO:0007669"/>
    <property type="project" value="InterPro"/>
</dbReference>
<dbReference type="GO" id="GO:0005344">
    <property type="term" value="F:oxygen carrier activity"/>
    <property type="evidence" value="ECO:0007669"/>
    <property type="project" value="UniProtKB-KW"/>
</dbReference>
<dbReference type="GO" id="GO:0004601">
    <property type="term" value="F:peroxidase activity"/>
    <property type="evidence" value="ECO:0007669"/>
    <property type="project" value="TreeGrafter"/>
</dbReference>
<dbReference type="GO" id="GO:0042744">
    <property type="term" value="P:hydrogen peroxide catabolic process"/>
    <property type="evidence" value="ECO:0007669"/>
    <property type="project" value="TreeGrafter"/>
</dbReference>
<dbReference type="CDD" id="cd08927">
    <property type="entry name" value="Hb-alpha-like"/>
    <property type="match status" value="1"/>
</dbReference>
<dbReference type="FunFam" id="1.10.490.10:FF:000002">
    <property type="entry name" value="Hemoglobin subunit alpha"/>
    <property type="match status" value="1"/>
</dbReference>
<dbReference type="Gene3D" id="1.10.490.10">
    <property type="entry name" value="Globins"/>
    <property type="match status" value="1"/>
</dbReference>
<dbReference type="InterPro" id="IPR000971">
    <property type="entry name" value="Globin"/>
</dbReference>
<dbReference type="InterPro" id="IPR009050">
    <property type="entry name" value="Globin-like_sf"/>
</dbReference>
<dbReference type="InterPro" id="IPR012292">
    <property type="entry name" value="Globin/Proto"/>
</dbReference>
<dbReference type="InterPro" id="IPR002338">
    <property type="entry name" value="Hemoglobin_a-typ"/>
</dbReference>
<dbReference type="InterPro" id="IPR050056">
    <property type="entry name" value="Hemoglobin_oxygen_transport"/>
</dbReference>
<dbReference type="PANTHER" id="PTHR11442">
    <property type="entry name" value="HEMOGLOBIN FAMILY MEMBER"/>
    <property type="match status" value="1"/>
</dbReference>
<dbReference type="PANTHER" id="PTHR11442:SF41">
    <property type="entry name" value="HEMOGLOBIN SUBUNIT ZETA"/>
    <property type="match status" value="1"/>
</dbReference>
<dbReference type="Pfam" id="PF00042">
    <property type="entry name" value="Globin"/>
    <property type="match status" value="1"/>
</dbReference>
<dbReference type="PRINTS" id="PR00612">
    <property type="entry name" value="ALPHAHAEM"/>
</dbReference>
<dbReference type="SUPFAM" id="SSF46458">
    <property type="entry name" value="Globin-like"/>
    <property type="match status" value="1"/>
</dbReference>
<dbReference type="PROSITE" id="PS01033">
    <property type="entry name" value="GLOBIN"/>
    <property type="match status" value="1"/>
</dbReference>
<protein>
    <recommendedName>
        <fullName>Hemoglobin subunit alpha-D</fullName>
    </recommendedName>
    <alternativeName>
        <fullName>Alpha-D-globin</fullName>
    </alternativeName>
    <alternativeName>
        <fullName>Hemoglobin alpha-D chain</fullName>
    </alternativeName>
</protein>
<gene>
    <name type="primary">HBAD</name>
</gene>
<keyword id="KW-0903">Direct protein sequencing</keyword>
<keyword id="KW-0349">Heme</keyword>
<keyword id="KW-0408">Iron</keyword>
<keyword id="KW-0479">Metal-binding</keyword>
<keyword id="KW-0561">Oxygen transport</keyword>
<keyword id="KW-0813">Transport</keyword>
<name>HBAD_ACCGE</name>
<proteinExistence type="evidence at protein level"/>
<comment type="function">
    <text>Involved in oxygen transport from the lung to the various peripheral tissues.</text>
</comment>
<comment type="subunit">
    <text>Heterotetramer of two alpha-D chains and two beta chains.</text>
</comment>
<comment type="tissue specificity">
    <text>Red blood cells.</text>
</comment>
<comment type="developmental stage">
    <text>In birds, the alpha-D chain occurs in a minor hemoglobin component, called hemoglobin d, which is expressed in late embryonic and adult life.</text>
</comment>
<comment type="similarity">
    <text evidence="1">Belongs to the globin family.</text>
</comment>
<accession>P08849</accession>